<organism>
    <name type="scientific">Herminiimonas arsenicoxydans</name>
    <dbReference type="NCBI Taxonomy" id="204773"/>
    <lineage>
        <taxon>Bacteria</taxon>
        <taxon>Pseudomonadati</taxon>
        <taxon>Pseudomonadota</taxon>
        <taxon>Betaproteobacteria</taxon>
        <taxon>Burkholderiales</taxon>
        <taxon>Oxalobacteraceae</taxon>
        <taxon>Herminiimonas</taxon>
    </lineage>
</organism>
<dbReference type="EC" id="4.98.1.1" evidence="1"/>
<dbReference type="EMBL" id="CU207211">
    <property type="protein sequence ID" value="CAL62772.1"/>
    <property type="molecule type" value="Genomic_DNA"/>
</dbReference>
<dbReference type="SMR" id="A4G8D5"/>
<dbReference type="STRING" id="204773.HEAR2650"/>
<dbReference type="KEGG" id="har:HEAR2650"/>
<dbReference type="eggNOG" id="COG0276">
    <property type="taxonomic scope" value="Bacteria"/>
</dbReference>
<dbReference type="HOGENOM" id="CLU_018884_0_0_4"/>
<dbReference type="OrthoDB" id="9809741at2"/>
<dbReference type="UniPathway" id="UPA00252">
    <property type="reaction ID" value="UER00325"/>
</dbReference>
<dbReference type="Proteomes" id="UP000006697">
    <property type="component" value="Chromosome"/>
</dbReference>
<dbReference type="GO" id="GO:0005737">
    <property type="term" value="C:cytoplasm"/>
    <property type="evidence" value="ECO:0007669"/>
    <property type="project" value="UniProtKB-SubCell"/>
</dbReference>
<dbReference type="GO" id="GO:0004325">
    <property type="term" value="F:ferrochelatase activity"/>
    <property type="evidence" value="ECO:0007669"/>
    <property type="project" value="UniProtKB-UniRule"/>
</dbReference>
<dbReference type="GO" id="GO:0046872">
    <property type="term" value="F:metal ion binding"/>
    <property type="evidence" value="ECO:0007669"/>
    <property type="project" value="UniProtKB-KW"/>
</dbReference>
<dbReference type="GO" id="GO:0006783">
    <property type="term" value="P:heme biosynthetic process"/>
    <property type="evidence" value="ECO:0007669"/>
    <property type="project" value="UniProtKB-UniRule"/>
</dbReference>
<dbReference type="CDD" id="cd00419">
    <property type="entry name" value="Ferrochelatase_C"/>
    <property type="match status" value="1"/>
</dbReference>
<dbReference type="CDD" id="cd03411">
    <property type="entry name" value="Ferrochelatase_N"/>
    <property type="match status" value="1"/>
</dbReference>
<dbReference type="FunFam" id="3.40.50.1400:FF:000002">
    <property type="entry name" value="Ferrochelatase"/>
    <property type="match status" value="1"/>
</dbReference>
<dbReference type="Gene3D" id="3.40.50.1400">
    <property type="match status" value="2"/>
</dbReference>
<dbReference type="HAMAP" id="MF_00323">
    <property type="entry name" value="Ferrochelatase"/>
    <property type="match status" value="1"/>
</dbReference>
<dbReference type="InterPro" id="IPR001015">
    <property type="entry name" value="Ferrochelatase"/>
</dbReference>
<dbReference type="InterPro" id="IPR019772">
    <property type="entry name" value="Ferrochelatase_AS"/>
</dbReference>
<dbReference type="InterPro" id="IPR033644">
    <property type="entry name" value="Ferrochelatase_C"/>
</dbReference>
<dbReference type="InterPro" id="IPR033659">
    <property type="entry name" value="Ferrochelatase_N"/>
</dbReference>
<dbReference type="NCBIfam" id="TIGR00109">
    <property type="entry name" value="hemH"/>
    <property type="match status" value="1"/>
</dbReference>
<dbReference type="PANTHER" id="PTHR11108">
    <property type="entry name" value="FERROCHELATASE"/>
    <property type="match status" value="1"/>
</dbReference>
<dbReference type="PANTHER" id="PTHR11108:SF1">
    <property type="entry name" value="FERROCHELATASE, MITOCHONDRIAL"/>
    <property type="match status" value="1"/>
</dbReference>
<dbReference type="Pfam" id="PF00762">
    <property type="entry name" value="Ferrochelatase"/>
    <property type="match status" value="1"/>
</dbReference>
<dbReference type="SUPFAM" id="SSF53800">
    <property type="entry name" value="Chelatase"/>
    <property type="match status" value="1"/>
</dbReference>
<dbReference type="PROSITE" id="PS00534">
    <property type="entry name" value="FERROCHELATASE"/>
    <property type="match status" value="1"/>
</dbReference>
<comment type="function">
    <text evidence="1">Catalyzes the ferrous insertion into protoporphyrin IX.</text>
</comment>
<comment type="catalytic activity">
    <reaction evidence="1">
        <text>heme b + 2 H(+) = protoporphyrin IX + Fe(2+)</text>
        <dbReference type="Rhea" id="RHEA:22584"/>
        <dbReference type="ChEBI" id="CHEBI:15378"/>
        <dbReference type="ChEBI" id="CHEBI:29033"/>
        <dbReference type="ChEBI" id="CHEBI:57306"/>
        <dbReference type="ChEBI" id="CHEBI:60344"/>
        <dbReference type="EC" id="4.98.1.1"/>
    </reaction>
</comment>
<comment type="pathway">
    <text evidence="1">Porphyrin-containing compound metabolism; protoheme biosynthesis; protoheme from protoporphyrin-IX: step 1/1.</text>
</comment>
<comment type="subcellular location">
    <subcellularLocation>
        <location evidence="1">Cytoplasm</location>
    </subcellularLocation>
</comment>
<comment type="similarity">
    <text evidence="1">Belongs to the ferrochelatase family.</text>
</comment>
<protein>
    <recommendedName>
        <fullName evidence="1">Ferrochelatase</fullName>
        <ecNumber evidence="1">4.98.1.1</ecNumber>
    </recommendedName>
    <alternativeName>
        <fullName evidence="1">Heme synthase</fullName>
    </alternativeName>
    <alternativeName>
        <fullName evidence="1">Protoheme ferro-lyase</fullName>
    </alternativeName>
</protein>
<sequence>MSFHTEPPYTHGSLPKTAVLLVNLGTPDAPTTSAVRTYLNEFLSDPRVVEIPRVIWWFILKLIILPFRSGKSAKKYAAIWSNEGSPLRVHTEKQAKLLTGYLGARGHEVRVEYAMRYGSPSVPEVLRKLKADGCDRILVLPAYPQYSGTTTASIFDAVFKHYARERNVPELRFVKHYHDHESYIRALQKSVLAHWDMAGRPDKLVMSFHGVPKRTLTLGDPYFCECHKTARLLAKELDLTEDQYVVTFQSRFGKAEWLQPYTAPTLQKLAKSGVKRVDVLCPGFTSDCLETLEEIGIEVRRDFLQAGGQDFNYIACLNENDAWIKALAQIAELHMIGWPTILSPALLEERNEEARISLAEAQRLGAQQ</sequence>
<evidence type="ECO:0000255" key="1">
    <source>
        <dbReference type="HAMAP-Rule" id="MF_00323"/>
    </source>
</evidence>
<accession>A4G8D5</accession>
<gene>
    <name evidence="1" type="primary">hemH</name>
    <name type="ordered locus">HEAR2650</name>
</gene>
<proteinExistence type="inferred from homology"/>
<reference key="1">
    <citation type="journal article" date="2007" name="PLoS Genet.">
        <title>A tale of two oxidation states: bacterial colonization of arsenic-rich environments.</title>
        <authorList>
            <person name="Muller D."/>
            <person name="Medigue C."/>
            <person name="Koechler S."/>
            <person name="Barbe V."/>
            <person name="Barakat M."/>
            <person name="Talla E."/>
            <person name="Bonnefoy V."/>
            <person name="Krin E."/>
            <person name="Arsene-Ploetze F."/>
            <person name="Carapito C."/>
            <person name="Chandler M."/>
            <person name="Cournoyer B."/>
            <person name="Cruveiller S."/>
            <person name="Dossat C."/>
            <person name="Duval S."/>
            <person name="Heymann M."/>
            <person name="Leize E."/>
            <person name="Lieutaud A."/>
            <person name="Lievremont D."/>
            <person name="Makita Y."/>
            <person name="Mangenot S."/>
            <person name="Nitschke W."/>
            <person name="Ortet P."/>
            <person name="Perdrial N."/>
            <person name="Schoepp B."/>
            <person name="Siguier P."/>
            <person name="Simeonova D.D."/>
            <person name="Rouy Z."/>
            <person name="Segurens B."/>
            <person name="Turlin E."/>
            <person name="Vallenet D."/>
            <person name="van Dorsselaer A."/>
            <person name="Weiss S."/>
            <person name="Weissenbach J."/>
            <person name="Lett M.-C."/>
            <person name="Danchin A."/>
            <person name="Bertin P.N."/>
        </authorList>
    </citation>
    <scope>NUCLEOTIDE SEQUENCE [LARGE SCALE GENOMIC DNA]</scope>
    <source>
        <strain>ULPAs1</strain>
    </source>
</reference>
<feature type="chain" id="PRO_1000059481" description="Ferrochelatase">
    <location>
        <begin position="1"/>
        <end position="368"/>
    </location>
</feature>
<feature type="binding site" evidence="1">
    <location>
        <position position="209"/>
    </location>
    <ligand>
        <name>Fe cation</name>
        <dbReference type="ChEBI" id="CHEBI:24875"/>
    </ligand>
</feature>
<feature type="binding site" evidence="1">
    <location>
        <position position="290"/>
    </location>
    <ligand>
        <name>Fe cation</name>
        <dbReference type="ChEBI" id="CHEBI:24875"/>
    </ligand>
</feature>
<keyword id="KW-0963">Cytoplasm</keyword>
<keyword id="KW-0350">Heme biosynthesis</keyword>
<keyword id="KW-0408">Iron</keyword>
<keyword id="KW-0456">Lyase</keyword>
<keyword id="KW-0479">Metal-binding</keyword>
<keyword id="KW-0627">Porphyrin biosynthesis</keyword>
<keyword id="KW-1185">Reference proteome</keyword>
<name>HEMH_HERAR</name>